<accession>Q8ZPM9</accession>
<dbReference type="EC" id="1.4.3.5" evidence="1"/>
<dbReference type="EMBL" id="AE006468">
    <property type="protein sequence ID" value="AAL20370.1"/>
    <property type="molecule type" value="Genomic_DNA"/>
</dbReference>
<dbReference type="RefSeq" id="NP_460411.1">
    <property type="nucleotide sequence ID" value="NC_003197.2"/>
</dbReference>
<dbReference type="RefSeq" id="WP_001282334.1">
    <property type="nucleotide sequence ID" value="NC_003197.2"/>
</dbReference>
<dbReference type="SMR" id="Q8ZPM9"/>
<dbReference type="STRING" id="99287.STM1448"/>
<dbReference type="PaxDb" id="99287-STM1448"/>
<dbReference type="GeneID" id="1252966"/>
<dbReference type="KEGG" id="stm:STM1448"/>
<dbReference type="PATRIC" id="fig|99287.12.peg.1531"/>
<dbReference type="HOGENOM" id="CLU_032263_2_2_6"/>
<dbReference type="OMA" id="AYFRTRP"/>
<dbReference type="PhylomeDB" id="Q8ZPM9"/>
<dbReference type="BioCyc" id="SENT99287:STM1448-MONOMER"/>
<dbReference type="UniPathway" id="UPA01068">
    <property type="reaction ID" value="UER00304"/>
</dbReference>
<dbReference type="UniPathway" id="UPA01068">
    <property type="reaction ID" value="UER00305"/>
</dbReference>
<dbReference type="Proteomes" id="UP000001014">
    <property type="component" value="Chromosome"/>
</dbReference>
<dbReference type="GO" id="GO:0010181">
    <property type="term" value="F:FMN binding"/>
    <property type="evidence" value="ECO:0007669"/>
    <property type="project" value="UniProtKB-UniRule"/>
</dbReference>
<dbReference type="GO" id="GO:0004733">
    <property type="term" value="F:pyridoxamine phosphate oxidase activity"/>
    <property type="evidence" value="ECO:0000318"/>
    <property type="project" value="GO_Central"/>
</dbReference>
<dbReference type="GO" id="GO:0042823">
    <property type="term" value="P:pyridoxal phosphate biosynthetic process"/>
    <property type="evidence" value="ECO:0000318"/>
    <property type="project" value="GO_Central"/>
</dbReference>
<dbReference type="GO" id="GO:0008615">
    <property type="term" value="P:pyridoxine biosynthetic process"/>
    <property type="evidence" value="ECO:0007669"/>
    <property type="project" value="UniProtKB-KW"/>
</dbReference>
<dbReference type="FunFam" id="2.30.110.10:FF:000001">
    <property type="entry name" value="Pyridoxine/pyridoxamine 5'-phosphate oxidase"/>
    <property type="match status" value="1"/>
</dbReference>
<dbReference type="Gene3D" id="2.30.110.10">
    <property type="entry name" value="Electron Transport, Fmn-binding Protein, Chain A"/>
    <property type="match status" value="1"/>
</dbReference>
<dbReference type="HAMAP" id="MF_01629">
    <property type="entry name" value="PdxH"/>
    <property type="match status" value="1"/>
</dbReference>
<dbReference type="InterPro" id="IPR000659">
    <property type="entry name" value="Pyridox_Oxase"/>
</dbReference>
<dbReference type="InterPro" id="IPR019740">
    <property type="entry name" value="Pyridox_Oxase_CS"/>
</dbReference>
<dbReference type="InterPro" id="IPR011576">
    <property type="entry name" value="Pyridox_Oxase_N"/>
</dbReference>
<dbReference type="InterPro" id="IPR019576">
    <property type="entry name" value="Pyridoxamine_oxidase_dimer_C"/>
</dbReference>
<dbReference type="InterPro" id="IPR012349">
    <property type="entry name" value="Split_barrel_FMN-bd"/>
</dbReference>
<dbReference type="NCBIfam" id="TIGR00558">
    <property type="entry name" value="pdxH"/>
    <property type="match status" value="1"/>
</dbReference>
<dbReference type="NCBIfam" id="NF004231">
    <property type="entry name" value="PRK05679.1"/>
    <property type="match status" value="1"/>
</dbReference>
<dbReference type="PANTHER" id="PTHR10851:SF0">
    <property type="entry name" value="PYRIDOXINE-5'-PHOSPHATE OXIDASE"/>
    <property type="match status" value="1"/>
</dbReference>
<dbReference type="PANTHER" id="PTHR10851">
    <property type="entry name" value="PYRIDOXINE-5-PHOSPHATE OXIDASE"/>
    <property type="match status" value="1"/>
</dbReference>
<dbReference type="Pfam" id="PF10590">
    <property type="entry name" value="PNP_phzG_C"/>
    <property type="match status" value="1"/>
</dbReference>
<dbReference type="Pfam" id="PF01243">
    <property type="entry name" value="PNPOx_N"/>
    <property type="match status" value="1"/>
</dbReference>
<dbReference type="PIRSF" id="PIRSF000190">
    <property type="entry name" value="Pyd_amn-ph_oxd"/>
    <property type="match status" value="1"/>
</dbReference>
<dbReference type="SUPFAM" id="SSF50475">
    <property type="entry name" value="FMN-binding split barrel"/>
    <property type="match status" value="1"/>
</dbReference>
<dbReference type="PROSITE" id="PS01064">
    <property type="entry name" value="PYRIDOX_OXIDASE"/>
    <property type="match status" value="1"/>
</dbReference>
<gene>
    <name evidence="1" type="primary">pdxH</name>
    <name type="ordered locus">STM1448</name>
</gene>
<organism>
    <name type="scientific">Salmonella typhimurium (strain LT2 / SGSC1412 / ATCC 700720)</name>
    <dbReference type="NCBI Taxonomy" id="99287"/>
    <lineage>
        <taxon>Bacteria</taxon>
        <taxon>Pseudomonadati</taxon>
        <taxon>Pseudomonadota</taxon>
        <taxon>Gammaproteobacteria</taxon>
        <taxon>Enterobacterales</taxon>
        <taxon>Enterobacteriaceae</taxon>
        <taxon>Salmonella</taxon>
    </lineage>
</organism>
<keyword id="KW-0285">Flavoprotein</keyword>
<keyword id="KW-0288">FMN</keyword>
<keyword id="KW-0560">Oxidoreductase</keyword>
<keyword id="KW-0664">Pyridoxine biosynthesis</keyword>
<keyword id="KW-1185">Reference proteome</keyword>
<proteinExistence type="inferred from homology"/>
<feature type="chain" id="PRO_0000167753" description="Pyridoxine/pyridoxamine 5'-phosphate oxidase">
    <location>
        <begin position="1"/>
        <end position="218"/>
    </location>
</feature>
<feature type="binding site" evidence="1">
    <location>
        <begin position="14"/>
        <end position="17"/>
    </location>
    <ligand>
        <name>substrate</name>
    </ligand>
</feature>
<feature type="binding site" evidence="1">
    <location>
        <begin position="67"/>
        <end position="72"/>
    </location>
    <ligand>
        <name>FMN</name>
        <dbReference type="ChEBI" id="CHEBI:58210"/>
    </ligand>
</feature>
<feature type="binding site" evidence="1">
    <location>
        <position position="72"/>
    </location>
    <ligand>
        <name>substrate</name>
    </ligand>
</feature>
<feature type="binding site" evidence="1">
    <location>
        <begin position="82"/>
        <end position="83"/>
    </location>
    <ligand>
        <name>FMN</name>
        <dbReference type="ChEBI" id="CHEBI:58210"/>
    </ligand>
</feature>
<feature type="binding site" evidence="1">
    <location>
        <position position="88"/>
    </location>
    <ligand>
        <name>FMN</name>
        <dbReference type="ChEBI" id="CHEBI:58210"/>
    </ligand>
</feature>
<feature type="binding site" evidence="1">
    <location>
        <position position="89"/>
    </location>
    <ligand>
        <name>FMN</name>
        <dbReference type="ChEBI" id="CHEBI:58210"/>
    </ligand>
</feature>
<feature type="binding site" evidence="1">
    <location>
        <position position="111"/>
    </location>
    <ligand>
        <name>FMN</name>
        <dbReference type="ChEBI" id="CHEBI:58210"/>
    </ligand>
</feature>
<feature type="binding site" evidence="1">
    <location>
        <position position="129"/>
    </location>
    <ligand>
        <name>substrate</name>
    </ligand>
</feature>
<feature type="binding site" evidence="1">
    <location>
        <position position="133"/>
    </location>
    <ligand>
        <name>substrate</name>
    </ligand>
</feature>
<feature type="binding site" evidence="1">
    <location>
        <position position="137"/>
    </location>
    <ligand>
        <name>substrate</name>
    </ligand>
</feature>
<feature type="binding site" evidence="1">
    <location>
        <begin position="146"/>
        <end position="147"/>
    </location>
    <ligand>
        <name>FMN</name>
        <dbReference type="ChEBI" id="CHEBI:58210"/>
    </ligand>
</feature>
<feature type="binding site" evidence="1">
    <location>
        <position position="191"/>
    </location>
    <ligand>
        <name>FMN</name>
        <dbReference type="ChEBI" id="CHEBI:58210"/>
    </ligand>
</feature>
<feature type="binding site" evidence="1">
    <location>
        <begin position="197"/>
        <end position="199"/>
    </location>
    <ligand>
        <name>substrate</name>
    </ligand>
</feature>
<feature type="binding site" evidence="1">
    <location>
        <position position="201"/>
    </location>
    <ligand>
        <name>FMN</name>
        <dbReference type="ChEBI" id="CHEBI:58210"/>
    </ligand>
</feature>
<evidence type="ECO:0000255" key="1">
    <source>
        <dbReference type="HAMAP-Rule" id="MF_01629"/>
    </source>
</evidence>
<comment type="function">
    <text evidence="1">Catalyzes the oxidation of either pyridoxine 5'-phosphate (PNP) or pyridoxamine 5'-phosphate (PMP) into pyridoxal 5'-phosphate (PLP).</text>
</comment>
<comment type="catalytic activity">
    <reaction evidence="1">
        <text>pyridoxamine 5'-phosphate + O2 + H2O = pyridoxal 5'-phosphate + H2O2 + NH4(+)</text>
        <dbReference type="Rhea" id="RHEA:15817"/>
        <dbReference type="ChEBI" id="CHEBI:15377"/>
        <dbReference type="ChEBI" id="CHEBI:15379"/>
        <dbReference type="ChEBI" id="CHEBI:16240"/>
        <dbReference type="ChEBI" id="CHEBI:28938"/>
        <dbReference type="ChEBI" id="CHEBI:58451"/>
        <dbReference type="ChEBI" id="CHEBI:597326"/>
        <dbReference type="EC" id="1.4.3.5"/>
    </reaction>
</comment>
<comment type="catalytic activity">
    <reaction evidence="1">
        <text>pyridoxine 5'-phosphate + O2 = pyridoxal 5'-phosphate + H2O2</text>
        <dbReference type="Rhea" id="RHEA:15149"/>
        <dbReference type="ChEBI" id="CHEBI:15379"/>
        <dbReference type="ChEBI" id="CHEBI:16240"/>
        <dbReference type="ChEBI" id="CHEBI:58589"/>
        <dbReference type="ChEBI" id="CHEBI:597326"/>
        <dbReference type="EC" id="1.4.3.5"/>
    </reaction>
</comment>
<comment type="cofactor">
    <cofactor evidence="1">
        <name>FMN</name>
        <dbReference type="ChEBI" id="CHEBI:58210"/>
    </cofactor>
    <text evidence="1">Binds 1 FMN per subunit.</text>
</comment>
<comment type="pathway">
    <text evidence="1">Cofactor metabolism; pyridoxal 5'-phosphate salvage; pyridoxal 5'-phosphate from pyridoxamine 5'-phosphate: step 1/1.</text>
</comment>
<comment type="pathway">
    <text evidence="1">Cofactor metabolism; pyridoxal 5'-phosphate salvage; pyridoxal 5'-phosphate from pyridoxine 5'-phosphate: step 1/1.</text>
</comment>
<comment type="subunit">
    <text evidence="1">Homodimer.</text>
</comment>
<comment type="similarity">
    <text evidence="1">Belongs to the pyridoxamine 5'-phosphate oxidase family.</text>
</comment>
<sequence length="218" mass="25499">MSDNDQLQQIAHLRREYTKGGLRRRDLPAEPLTLFERWLGQACDARLADPTAMVVATVDDKGQPYQRIVLLKHYDEKGLVFYTNLGSRKAHQIEHNPRISLLFPWHMLERQVMVTGKAERLSTLEVVRYFHSRPRDSQIGAWVSKQSSRISARGILESKFLELKQKFQQGEVPLPSFWGGFRVSIEQMEFWQGGEHRLHDRFLYQRDDGAWKIDRLAP</sequence>
<name>PDXH_SALTY</name>
<protein>
    <recommendedName>
        <fullName evidence="1">Pyridoxine/pyridoxamine 5'-phosphate oxidase</fullName>
        <ecNumber evidence="1">1.4.3.5</ecNumber>
    </recommendedName>
    <alternativeName>
        <fullName evidence="1">PNP/PMP oxidase</fullName>
        <shortName evidence="1">PNPOx</shortName>
    </alternativeName>
    <alternativeName>
        <fullName evidence="1">Pyridoxal 5'-phosphate synthase</fullName>
    </alternativeName>
</protein>
<reference key="1">
    <citation type="journal article" date="2001" name="Nature">
        <title>Complete genome sequence of Salmonella enterica serovar Typhimurium LT2.</title>
        <authorList>
            <person name="McClelland M."/>
            <person name="Sanderson K.E."/>
            <person name="Spieth J."/>
            <person name="Clifton S.W."/>
            <person name="Latreille P."/>
            <person name="Courtney L."/>
            <person name="Porwollik S."/>
            <person name="Ali J."/>
            <person name="Dante M."/>
            <person name="Du F."/>
            <person name="Hou S."/>
            <person name="Layman D."/>
            <person name="Leonard S."/>
            <person name="Nguyen C."/>
            <person name="Scott K."/>
            <person name="Holmes A."/>
            <person name="Grewal N."/>
            <person name="Mulvaney E."/>
            <person name="Ryan E."/>
            <person name="Sun H."/>
            <person name="Florea L."/>
            <person name="Miller W."/>
            <person name="Stoneking T."/>
            <person name="Nhan M."/>
            <person name="Waterston R."/>
            <person name="Wilson R.K."/>
        </authorList>
    </citation>
    <scope>NUCLEOTIDE SEQUENCE [LARGE SCALE GENOMIC DNA]</scope>
    <source>
        <strain>LT2 / SGSC1412 / ATCC 700720</strain>
    </source>
</reference>